<accession>B7HAY1</accession>
<reference key="1">
    <citation type="submission" date="2008-10" db="EMBL/GenBank/DDBJ databases">
        <title>Genome sequence of Bacillus cereus B4264.</title>
        <authorList>
            <person name="Dodson R.J."/>
            <person name="Durkin A.S."/>
            <person name="Rosovitz M.J."/>
            <person name="Rasko D.A."/>
            <person name="Hoffmaster A."/>
            <person name="Ravel J."/>
            <person name="Sutton G."/>
        </authorList>
    </citation>
    <scope>NUCLEOTIDE SEQUENCE [LARGE SCALE GENOMIC DNA]</scope>
    <source>
        <strain>B4264</strain>
    </source>
</reference>
<comment type="subcellular location">
    <subcellularLocation>
        <location evidence="1">Spore core</location>
    </subcellularLocation>
</comment>
<comment type="induction">
    <text evidence="1">Expressed only in the forespore compartment of sporulating cells.</text>
</comment>
<comment type="similarity">
    <text evidence="1">Belongs to the SspN family.</text>
</comment>
<keyword id="KW-0749">Sporulation</keyword>
<evidence type="ECO:0000255" key="1">
    <source>
        <dbReference type="HAMAP-Rule" id="MF_01505"/>
    </source>
</evidence>
<evidence type="ECO:0000256" key="2">
    <source>
        <dbReference type="SAM" id="MobiDB-lite"/>
    </source>
</evidence>
<sequence>MGNPKKNSKDFAPNHIGTQSKKAGGNKGKQMQDQTGKQPIVDNG</sequence>
<name>SSPN_BACC4</name>
<protein>
    <recommendedName>
        <fullName evidence="1">Small, acid-soluble spore protein N</fullName>
        <shortName evidence="1">SASP N</shortName>
    </recommendedName>
</protein>
<proteinExistence type="inferred from homology"/>
<feature type="chain" id="PRO_1000196552" description="Small, acid-soluble spore protein N">
    <location>
        <begin position="1"/>
        <end position="44"/>
    </location>
</feature>
<feature type="region of interest" description="Disordered" evidence="2">
    <location>
        <begin position="1"/>
        <end position="44"/>
    </location>
</feature>
<organism>
    <name type="scientific">Bacillus cereus (strain B4264)</name>
    <dbReference type="NCBI Taxonomy" id="405532"/>
    <lineage>
        <taxon>Bacteria</taxon>
        <taxon>Bacillati</taxon>
        <taxon>Bacillota</taxon>
        <taxon>Bacilli</taxon>
        <taxon>Bacillales</taxon>
        <taxon>Bacillaceae</taxon>
        <taxon>Bacillus</taxon>
        <taxon>Bacillus cereus group</taxon>
    </lineage>
</organism>
<gene>
    <name evidence="1" type="primary">sspN</name>
    <name type="ordered locus">BCB4264_A3717</name>
</gene>
<dbReference type="EMBL" id="CP001176">
    <property type="protein sequence ID" value="ACK60313.1"/>
    <property type="molecule type" value="Genomic_DNA"/>
</dbReference>
<dbReference type="RefSeq" id="WP_000527987.1">
    <property type="nucleotide sequence ID" value="NZ_VEHB01000002.1"/>
</dbReference>
<dbReference type="GeneID" id="93007574"/>
<dbReference type="KEGG" id="bcb:BCB4264_A3717"/>
<dbReference type="HOGENOM" id="CLU_216714_0_0_9"/>
<dbReference type="Proteomes" id="UP000007096">
    <property type="component" value="Chromosome"/>
</dbReference>
<dbReference type="GO" id="GO:0042601">
    <property type="term" value="C:endospore-forming forespore"/>
    <property type="evidence" value="ECO:0007669"/>
    <property type="project" value="InterPro"/>
</dbReference>
<dbReference type="GO" id="GO:0030436">
    <property type="term" value="P:asexual sporulation"/>
    <property type="evidence" value="ECO:0007669"/>
    <property type="project" value="UniProtKB-UniRule"/>
</dbReference>
<dbReference type="GO" id="GO:0030435">
    <property type="term" value="P:sporulation resulting in formation of a cellular spore"/>
    <property type="evidence" value="ECO:0007669"/>
    <property type="project" value="UniProtKB-KW"/>
</dbReference>
<dbReference type="HAMAP" id="MF_01505">
    <property type="entry name" value="SspN"/>
    <property type="match status" value="1"/>
</dbReference>
<dbReference type="InterPro" id="IPR012612">
    <property type="entry name" value="SASP_SspN"/>
</dbReference>
<dbReference type="NCBIfam" id="NF006904">
    <property type="entry name" value="PRK09398.1"/>
    <property type="match status" value="1"/>
</dbReference>
<dbReference type="Pfam" id="PF08177">
    <property type="entry name" value="SspN"/>
    <property type="match status" value="1"/>
</dbReference>